<dbReference type="EC" id="4.2.3.-" evidence="5"/>
<dbReference type="EMBL" id="HQ651179">
    <property type="protein sequence ID" value="AEJ91555.1"/>
    <property type="molecule type" value="mRNA"/>
</dbReference>
<dbReference type="SMR" id="G0Y7D2"/>
<dbReference type="UniPathway" id="UPA00213"/>
<dbReference type="GO" id="GO:0009507">
    <property type="term" value="C:chloroplast"/>
    <property type="evidence" value="ECO:0007669"/>
    <property type="project" value="UniProtKB-SubCell"/>
</dbReference>
<dbReference type="GO" id="GO:0102700">
    <property type="term" value="F:alpha-thujene synthase activity"/>
    <property type="evidence" value="ECO:0000314"/>
    <property type="project" value="UniProtKB"/>
</dbReference>
<dbReference type="GO" id="GO:0000287">
    <property type="term" value="F:magnesium ion binding"/>
    <property type="evidence" value="ECO:0007669"/>
    <property type="project" value="InterPro"/>
</dbReference>
<dbReference type="GO" id="GO:0010333">
    <property type="term" value="F:terpene synthase activity"/>
    <property type="evidence" value="ECO:0007669"/>
    <property type="project" value="InterPro"/>
</dbReference>
<dbReference type="GO" id="GO:0016102">
    <property type="term" value="P:diterpenoid biosynthetic process"/>
    <property type="evidence" value="ECO:0007669"/>
    <property type="project" value="InterPro"/>
</dbReference>
<dbReference type="GO" id="GO:0010597">
    <property type="term" value="P:green leaf volatile biosynthetic process"/>
    <property type="evidence" value="ECO:0000314"/>
    <property type="project" value="UniProtKB"/>
</dbReference>
<dbReference type="GO" id="GO:0043693">
    <property type="term" value="P:monoterpene biosynthetic process"/>
    <property type="evidence" value="ECO:0000314"/>
    <property type="project" value="UniProtKB"/>
</dbReference>
<dbReference type="CDD" id="cd00684">
    <property type="entry name" value="Terpene_cyclase_plant_C1"/>
    <property type="match status" value="1"/>
</dbReference>
<dbReference type="FunFam" id="1.10.600.10:FF:000007">
    <property type="entry name" value="Isoprene synthase, chloroplastic"/>
    <property type="match status" value="1"/>
</dbReference>
<dbReference type="FunFam" id="1.50.10.130:FF:000001">
    <property type="entry name" value="Isoprene synthase, chloroplastic"/>
    <property type="match status" value="1"/>
</dbReference>
<dbReference type="Gene3D" id="1.10.600.10">
    <property type="entry name" value="Farnesyl Diphosphate Synthase"/>
    <property type="match status" value="1"/>
</dbReference>
<dbReference type="Gene3D" id="1.50.10.130">
    <property type="entry name" value="Terpene synthase, N-terminal domain"/>
    <property type="match status" value="1"/>
</dbReference>
<dbReference type="InterPro" id="IPR008949">
    <property type="entry name" value="Isoprenoid_synthase_dom_sf"/>
</dbReference>
<dbReference type="InterPro" id="IPR034741">
    <property type="entry name" value="Terpene_cyclase-like_1_C"/>
</dbReference>
<dbReference type="InterPro" id="IPR044814">
    <property type="entry name" value="Terpene_cyclase_plant_C1"/>
</dbReference>
<dbReference type="InterPro" id="IPR001906">
    <property type="entry name" value="Terpene_synth_N"/>
</dbReference>
<dbReference type="InterPro" id="IPR036965">
    <property type="entry name" value="Terpene_synth_N_sf"/>
</dbReference>
<dbReference type="InterPro" id="IPR050148">
    <property type="entry name" value="Terpene_synthase-like"/>
</dbReference>
<dbReference type="InterPro" id="IPR005630">
    <property type="entry name" value="Terpene_synthase_metal-bd"/>
</dbReference>
<dbReference type="InterPro" id="IPR008930">
    <property type="entry name" value="Terpenoid_cyclase/PrenylTrfase"/>
</dbReference>
<dbReference type="PANTHER" id="PTHR31225">
    <property type="entry name" value="OS04G0344100 PROTEIN-RELATED"/>
    <property type="match status" value="1"/>
</dbReference>
<dbReference type="PANTHER" id="PTHR31225:SF252">
    <property type="entry name" value="TERPENE SYNTHASE 12-RELATED"/>
    <property type="match status" value="1"/>
</dbReference>
<dbReference type="Pfam" id="PF01397">
    <property type="entry name" value="Terpene_synth"/>
    <property type="match status" value="1"/>
</dbReference>
<dbReference type="Pfam" id="PF03936">
    <property type="entry name" value="Terpene_synth_C"/>
    <property type="match status" value="1"/>
</dbReference>
<dbReference type="SFLD" id="SFLDS00005">
    <property type="entry name" value="Isoprenoid_Synthase_Type_I"/>
    <property type="match status" value="1"/>
</dbReference>
<dbReference type="SFLD" id="SFLDG01019">
    <property type="entry name" value="Terpene_Cyclase_Like_1_C_Termi"/>
    <property type="match status" value="1"/>
</dbReference>
<dbReference type="SUPFAM" id="SSF48239">
    <property type="entry name" value="Terpenoid cyclases/Protein prenyltransferases"/>
    <property type="match status" value="1"/>
</dbReference>
<dbReference type="SUPFAM" id="SSF48576">
    <property type="entry name" value="Terpenoid synthases"/>
    <property type="match status" value="1"/>
</dbReference>
<feature type="transit peptide" description="Chloroplast" evidence="4">
    <location>
        <begin position="1"/>
        <end position="32"/>
    </location>
</feature>
<feature type="chain" id="PRO_0000455073" description="Alpha-thujene synthase, chloroplastic">
    <location>
        <begin position="33"/>
        <end position="580"/>
    </location>
</feature>
<feature type="short sequence motif" description="DDXXD motif" evidence="7">
    <location>
        <begin position="333"/>
        <end position="337"/>
    </location>
</feature>
<feature type="binding site" evidence="2">
    <location>
        <position position="296"/>
    </location>
    <ligand>
        <name>(2E)-geranyl diphosphate</name>
        <dbReference type="ChEBI" id="CHEBI:58057"/>
    </ligand>
</feature>
<feature type="binding site" evidence="2">
    <location>
        <position position="333"/>
    </location>
    <ligand>
        <name>(2E)-geranyl diphosphate</name>
        <dbReference type="ChEBI" id="CHEBI:58057"/>
    </ligand>
</feature>
<feature type="binding site" evidence="2">
    <location>
        <position position="333"/>
    </location>
    <ligand>
        <name>Mg(2+)</name>
        <dbReference type="ChEBI" id="CHEBI:18420"/>
        <label>1</label>
    </ligand>
</feature>
<feature type="binding site" evidence="2">
    <location>
        <position position="333"/>
    </location>
    <ligand>
        <name>Mg(2+)</name>
        <dbReference type="ChEBI" id="CHEBI:18420"/>
        <label>2</label>
    </ligand>
</feature>
<feature type="binding site" evidence="2">
    <location>
        <position position="337"/>
    </location>
    <ligand>
        <name>(2E)-geranyl diphosphate</name>
        <dbReference type="ChEBI" id="CHEBI:58057"/>
    </ligand>
</feature>
<feature type="binding site" evidence="2">
    <location>
        <position position="337"/>
    </location>
    <ligand>
        <name>Mg(2+)</name>
        <dbReference type="ChEBI" id="CHEBI:18420"/>
        <label>1</label>
    </ligand>
</feature>
<feature type="binding site" evidence="2">
    <location>
        <position position="337"/>
    </location>
    <ligand>
        <name>Mg(2+)</name>
        <dbReference type="ChEBI" id="CHEBI:18420"/>
        <label>2</label>
    </ligand>
</feature>
<feature type="binding site" evidence="2">
    <location>
        <position position="473"/>
    </location>
    <ligand>
        <name>(2E)-geranyl diphosphate</name>
        <dbReference type="ChEBI" id="CHEBI:58057"/>
    </ligand>
</feature>
<feature type="binding site" evidence="2">
    <location>
        <position position="476"/>
    </location>
    <ligand>
        <name>(2E)-geranyl diphosphate</name>
        <dbReference type="ChEBI" id="CHEBI:58057"/>
    </ligand>
</feature>
<feature type="binding site" evidence="2">
    <location>
        <position position="476"/>
    </location>
    <ligand>
        <name>Mg(2+)</name>
        <dbReference type="ChEBI" id="CHEBI:18420"/>
        <label>3</label>
    </ligand>
</feature>
<feature type="binding site" evidence="2">
    <location>
        <position position="480"/>
    </location>
    <ligand>
        <name>Mg(2+)</name>
        <dbReference type="ChEBI" id="CHEBI:18420"/>
        <label>3</label>
    </ligand>
</feature>
<feature type="binding site" evidence="2">
    <location>
        <position position="484"/>
    </location>
    <ligand>
        <name>Mg(2+)</name>
        <dbReference type="ChEBI" id="CHEBI:18420"/>
        <label>3</label>
    </ligand>
</feature>
<proteinExistence type="evidence at protein level"/>
<keyword id="KW-0150">Chloroplast</keyword>
<keyword id="KW-0456">Lyase</keyword>
<keyword id="KW-0460">Magnesium</keyword>
<keyword id="KW-0479">Metal-binding</keyword>
<keyword id="KW-0934">Plastid</keyword>
<keyword id="KW-0809">Transit peptide</keyword>
<protein>
    <recommendedName>
        <fullName evidence="6">Alpha-thujene synthase, chloroplastic</fullName>
        <ecNumber evidence="5">4.2.3.-</ecNumber>
    </recommendedName>
    <alternativeName>
        <fullName evidence="6">Terpene synthase 2</fullName>
        <shortName evidence="6">LcTPS2</shortName>
    </alternativeName>
</protein>
<gene>
    <name evidence="6" type="primary">TPS2</name>
</gene>
<accession>G0Y7D2</accession>
<sequence>MALQLLTPSFSFQHSPSPHKLTTLRYTHHRIRCTASAPSYSDLVRRRSANYKPSKWDSNFVETLESDYKKENHEMYIEKLMGDVKHLMKEVVNPIEKMELVDTIQRLGLGYLFNKEIKEVLNTITTSKATLKTKKDLHAVALQFRLLRQHGYEVSPDAFHEFKDEKGGFKESLCMDIKGMLCLYEASHLSFQGEVVLDEAREFTSTHLKAIGGNIDPVLLKKVRHSLEMPLHWRMLRLEARWYIETYDEEDRKNPSLAELAKHDFNSVQTIYQRSLKRMSRWWRDLGLGERLEFSRDRLVECFFWTTGVIFDPQFERCRGVLTKVNQLVSTIDDVYDVYGSLEELELFTDAVDRWDIRAMEQLPEYMKICYLALYNTTNDIAYEALKEEGLDVIPYLKKVWTDLCKSYIVEARWYSNGYKPTLEEYLENAWTSIAGPVALVHAYFSFGQKMPFEALNYSNTSSLIKWSSMIFRLCDDLATSSDEVARGDVPKSIQCYMYEAGVSESVARDHIKYLIDEAWKKMNECLVYNTPFLQPLINAGLNLARMAHCMYERGDGHGFSNELDKKRVLLLLAEPFKFM</sequence>
<reference key="1">
    <citation type="journal article" date="2011" name="Tree Genet. Genomes">
        <title>Molecular cloning and characterization of monoterpene synthases from Litsea cubeba (Lour.) Persoon.</title>
        <authorList>
            <person name="Chang Y.-T."/>
            <person name="Chu F.-H."/>
        </authorList>
    </citation>
    <scope>NUCLEOTIDE SEQUENCE [MRNA]</scope>
    <scope>FUNCTION</scope>
    <scope>CATALYTIC ACTIVITY</scope>
    <scope>PATHWAY</scope>
    <scope>TISSUE SPECIFICITY</scope>
</reference>
<comment type="function">
    <text evidence="5">Monoterpene synthase (TPS) involved in the biosynthesis of monoterpene natural products used by traditional Chinese medicine to treat headache, inflammation and intoxication (Ref.1). Catalyzes the conversion of (2E)-geranyl diphosphate (GPP) into alpha-thujene (Ref.1).</text>
</comment>
<comment type="catalytic activity">
    <reaction evidence="5">
        <text>(2E)-geranyl diphosphate = alpha-thujene + diphosphate</text>
        <dbReference type="Rhea" id="RHEA:68644"/>
        <dbReference type="ChEBI" id="CHEBI:33019"/>
        <dbReference type="ChEBI" id="CHEBI:50031"/>
        <dbReference type="ChEBI" id="CHEBI:58057"/>
    </reaction>
    <physiologicalReaction direction="left-to-right" evidence="5">
        <dbReference type="Rhea" id="RHEA:68645"/>
    </physiologicalReaction>
</comment>
<comment type="cofactor">
    <cofactor evidence="1">
        <name>Mg(2+)</name>
        <dbReference type="ChEBI" id="CHEBI:18420"/>
    </cofactor>
    <cofactor evidence="1">
        <name>Mn(2+)</name>
        <dbReference type="ChEBI" id="CHEBI:29035"/>
    </cofactor>
    <text evidence="1">Binds 3 Mg(2+) or Mn(2+) ions per subunit.</text>
</comment>
<comment type="pathway">
    <text evidence="5">Secondary metabolite biosynthesis; terpenoid biosynthesis.</text>
</comment>
<comment type="subunit">
    <text evidence="3">Monomer.</text>
</comment>
<comment type="subcellular location">
    <subcellularLocation>
        <location evidence="4">Plastid</location>
        <location evidence="4">Chloroplast</location>
    </subcellularLocation>
</comment>
<comment type="tissue specificity">
    <text evidence="5">Expressed in developing and mature fruits (Ref.1). Barely detectable in leaves and shoots (Ref.1).</text>
</comment>
<comment type="domain">
    <text evidence="7">The Asp-Asp-Xaa-Xaa-Asp/Glu (DDXXD/E) motif is important for the catalytic activity, presumably through binding to Mg(2+).</text>
</comment>
<comment type="similarity">
    <text evidence="7">Belongs to the terpene synthase family. Tpsb subfamily.</text>
</comment>
<name>TPS2_LITCU</name>
<evidence type="ECO:0000250" key="1">
    <source>
        <dbReference type="UniProtKB" id="A0A1C9J6A7"/>
    </source>
</evidence>
<evidence type="ECO:0000250" key="2">
    <source>
        <dbReference type="UniProtKB" id="Q40577"/>
    </source>
</evidence>
<evidence type="ECO:0000250" key="3">
    <source>
        <dbReference type="UniProtKB" id="Q6JD73"/>
    </source>
</evidence>
<evidence type="ECO:0000255" key="4"/>
<evidence type="ECO:0000269" key="5">
    <source ref="1"/>
</evidence>
<evidence type="ECO:0000303" key="6">
    <source ref="1"/>
</evidence>
<evidence type="ECO:0000305" key="7"/>
<organism>
    <name type="scientific">Litsea cubeba</name>
    <name type="common">Aromatic litsea</name>
    <name type="synonym">Laurus cubeba</name>
    <dbReference type="NCBI Taxonomy" id="155299"/>
    <lineage>
        <taxon>Eukaryota</taxon>
        <taxon>Viridiplantae</taxon>
        <taxon>Streptophyta</taxon>
        <taxon>Embryophyta</taxon>
        <taxon>Tracheophyta</taxon>
        <taxon>Spermatophyta</taxon>
        <taxon>Magnoliopsida</taxon>
        <taxon>Magnoliidae</taxon>
        <taxon>Laurales</taxon>
        <taxon>Lauraceae</taxon>
        <taxon>Litsea</taxon>
    </lineage>
</organism>